<evidence type="ECO:0000250" key="1"/>
<evidence type="ECO:0000305" key="2"/>
<gene>
    <name type="primary">pyrF</name>
    <name type="synonym">ura3</name>
    <name type="ordered locus">VNG_1673G</name>
</gene>
<protein>
    <recommendedName>
        <fullName>Orotidine 5'-phosphate decarboxylase</fullName>
        <ecNumber>4.1.1.23</ecNumber>
    </recommendedName>
    <alternativeName>
        <fullName>OMP decarboxylase</fullName>
        <shortName>OMPDCase</shortName>
        <shortName>OMPdecase</shortName>
    </alternativeName>
</protein>
<sequence length="267" mass="29048">MSFVEELGARIEAADSVVSVGLDPDMERLPEDVQDAELPRWAFNRRIIDATHEHAAVFKPNAAFYEDSDGWRALRETVAYAHGKGVPVLLDAKRADIGNTARQYAEILAHVDAITVNPYLGEDALQPFLTQDEAGVFVLCRTSNEGGMDFQHLELAAYDRRLYEHVAERAAEWNAQYGDVGLVVGATAPDELQAIRERVPELPFLVPGVGAQGGDAEAAVEYGLNDDGVGLVNSTRGVIFAGEHGSAWAAAAGDAARTLRERLNRHR</sequence>
<proteinExistence type="inferred from homology"/>
<name>PYRF_HALSA</name>
<organism>
    <name type="scientific">Halobacterium salinarum (strain ATCC 700922 / JCM 11081 / NRC-1)</name>
    <name type="common">Halobacterium halobium</name>
    <dbReference type="NCBI Taxonomy" id="64091"/>
    <lineage>
        <taxon>Archaea</taxon>
        <taxon>Methanobacteriati</taxon>
        <taxon>Methanobacteriota</taxon>
        <taxon>Stenosarchaea group</taxon>
        <taxon>Halobacteria</taxon>
        <taxon>Halobacteriales</taxon>
        <taxon>Halobacteriaceae</taxon>
        <taxon>Halobacterium</taxon>
        <taxon>Halobacterium salinarum NRC-34001</taxon>
    </lineage>
</organism>
<accession>Q9P9M3</accession>
<dbReference type="EC" id="4.1.1.23"/>
<dbReference type="EMBL" id="AF187997">
    <property type="protein sequence ID" value="AAF36353.1"/>
    <property type="molecule type" value="Genomic_DNA"/>
</dbReference>
<dbReference type="EMBL" id="AE004437">
    <property type="protein sequence ID" value="AAG19923.1"/>
    <property type="molecule type" value="Genomic_DNA"/>
</dbReference>
<dbReference type="PIR" id="G84319">
    <property type="entry name" value="G84319"/>
</dbReference>
<dbReference type="RefSeq" id="WP_010903220.1">
    <property type="nucleotide sequence ID" value="NC_002607.1"/>
</dbReference>
<dbReference type="SMR" id="Q9P9M3"/>
<dbReference type="STRING" id="64091.VNG_1673G"/>
<dbReference type="PaxDb" id="64091-VNG_1673G"/>
<dbReference type="GeneID" id="68694336"/>
<dbReference type="KEGG" id="hal:VNG_1673G"/>
<dbReference type="PATRIC" id="fig|64091.14.peg.1274"/>
<dbReference type="HOGENOM" id="CLU_060704_1_0_2"/>
<dbReference type="InParanoid" id="Q9P9M3"/>
<dbReference type="OrthoDB" id="94124at2157"/>
<dbReference type="PhylomeDB" id="Q9P9M3"/>
<dbReference type="UniPathway" id="UPA00070">
    <property type="reaction ID" value="UER00120"/>
</dbReference>
<dbReference type="Proteomes" id="UP000000554">
    <property type="component" value="Chromosome"/>
</dbReference>
<dbReference type="GO" id="GO:0004590">
    <property type="term" value="F:orotidine-5'-phosphate decarboxylase activity"/>
    <property type="evidence" value="ECO:0007669"/>
    <property type="project" value="UniProtKB-UniRule"/>
</dbReference>
<dbReference type="GO" id="GO:0006207">
    <property type="term" value="P:'de novo' pyrimidine nucleobase biosynthetic process"/>
    <property type="evidence" value="ECO:0007669"/>
    <property type="project" value="InterPro"/>
</dbReference>
<dbReference type="GO" id="GO:0044205">
    <property type="term" value="P:'de novo' UMP biosynthetic process"/>
    <property type="evidence" value="ECO:0007669"/>
    <property type="project" value="UniProtKB-UniRule"/>
</dbReference>
<dbReference type="CDD" id="cd04725">
    <property type="entry name" value="OMP_decarboxylase_like"/>
    <property type="match status" value="1"/>
</dbReference>
<dbReference type="FunFam" id="3.20.20.70:FF:000246">
    <property type="entry name" value="Orotidine 5'-phosphate decarboxylase"/>
    <property type="match status" value="1"/>
</dbReference>
<dbReference type="Gene3D" id="3.20.20.70">
    <property type="entry name" value="Aldolase class I"/>
    <property type="match status" value="1"/>
</dbReference>
<dbReference type="HAMAP" id="MF_01215">
    <property type="entry name" value="OMPdecase_type2"/>
    <property type="match status" value="1"/>
</dbReference>
<dbReference type="InterPro" id="IPR013785">
    <property type="entry name" value="Aldolase_TIM"/>
</dbReference>
<dbReference type="InterPro" id="IPR018089">
    <property type="entry name" value="OMPdecase_AS"/>
</dbReference>
<dbReference type="InterPro" id="IPR011995">
    <property type="entry name" value="OMPdecase_type-2"/>
</dbReference>
<dbReference type="InterPro" id="IPR001754">
    <property type="entry name" value="OMPdeCOase_dom"/>
</dbReference>
<dbReference type="InterPro" id="IPR011060">
    <property type="entry name" value="RibuloseP-bd_barrel"/>
</dbReference>
<dbReference type="NCBIfam" id="TIGR02127">
    <property type="entry name" value="pyrF_sub2"/>
    <property type="match status" value="1"/>
</dbReference>
<dbReference type="PANTHER" id="PTHR43375">
    <property type="entry name" value="OROTIDINE 5'-PHOSPHATE DECARBOXYLASE"/>
    <property type="match status" value="1"/>
</dbReference>
<dbReference type="PANTHER" id="PTHR43375:SF1">
    <property type="entry name" value="OROTIDINE 5'-PHOSPHATE DECARBOXYLASE"/>
    <property type="match status" value="1"/>
</dbReference>
<dbReference type="Pfam" id="PF00215">
    <property type="entry name" value="OMPdecase"/>
    <property type="match status" value="1"/>
</dbReference>
<dbReference type="SMART" id="SM00934">
    <property type="entry name" value="OMPdecase"/>
    <property type="match status" value="1"/>
</dbReference>
<dbReference type="SUPFAM" id="SSF51366">
    <property type="entry name" value="Ribulose-phoshate binding barrel"/>
    <property type="match status" value="1"/>
</dbReference>
<dbReference type="PROSITE" id="PS00156">
    <property type="entry name" value="OMPDECASE"/>
    <property type="match status" value="1"/>
</dbReference>
<comment type="catalytic activity">
    <reaction>
        <text>orotidine 5'-phosphate + H(+) = UMP + CO2</text>
        <dbReference type="Rhea" id="RHEA:11596"/>
        <dbReference type="ChEBI" id="CHEBI:15378"/>
        <dbReference type="ChEBI" id="CHEBI:16526"/>
        <dbReference type="ChEBI" id="CHEBI:57538"/>
        <dbReference type="ChEBI" id="CHEBI:57865"/>
        <dbReference type="EC" id="4.1.1.23"/>
    </reaction>
</comment>
<comment type="pathway">
    <text>Pyrimidine metabolism; UMP biosynthesis via de novo pathway; UMP from orotate: step 2/2.</text>
</comment>
<comment type="similarity">
    <text evidence="2">Belongs to the OMP decarboxylase family. Type 2 subfamily.</text>
</comment>
<feature type="chain" id="PRO_0000134637" description="Orotidine 5'-phosphate decarboxylase">
    <location>
        <begin position="1"/>
        <end position="267"/>
    </location>
</feature>
<feature type="active site" description="Proton donor" evidence="1">
    <location>
        <position position="93"/>
    </location>
</feature>
<reference key="1">
    <citation type="journal article" date="2000" name="Mol. Microbiol.">
        <title>Homologous gene knockout in the archaeon Halobacterium salinarum with ura3 as a counterselectable marker.</title>
        <authorList>
            <person name="Peck R.F."/>
            <person name="DasSarma S."/>
            <person name="Krebs M.P."/>
        </authorList>
    </citation>
    <scope>NUCLEOTIDE SEQUENCE [GENOMIC DNA]</scope>
    <source>
        <strain>MPK1</strain>
    </source>
</reference>
<reference key="2">
    <citation type="journal article" date="2000" name="Proc. Natl. Acad. Sci. U.S.A.">
        <title>Genome sequence of Halobacterium species NRC-1.</title>
        <authorList>
            <person name="Ng W.V."/>
            <person name="Kennedy S.P."/>
            <person name="Mahairas G.G."/>
            <person name="Berquist B."/>
            <person name="Pan M."/>
            <person name="Shukla H.D."/>
            <person name="Lasky S.R."/>
            <person name="Baliga N.S."/>
            <person name="Thorsson V."/>
            <person name="Sbrogna J."/>
            <person name="Swartzell S."/>
            <person name="Weir D."/>
            <person name="Hall J."/>
            <person name="Dahl T.A."/>
            <person name="Welti R."/>
            <person name="Goo Y.A."/>
            <person name="Leithauser B."/>
            <person name="Keller K."/>
            <person name="Cruz R."/>
            <person name="Danson M.J."/>
            <person name="Hough D.W."/>
            <person name="Maddocks D.G."/>
            <person name="Jablonski P.E."/>
            <person name="Krebs M.P."/>
            <person name="Angevine C.M."/>
            <person name="Dale H."/>
            <person name="Isenbarger T.A."/>
            <person name="Peck R.F."/>
            <person name="Pohlschroder M."/>
            <person name="Spudich J.L."/>
            <person name="Jung K.-H."/>
            <person name="Alam M."/>
            <person name="Freitas T."/>
            <person name="Hou S."/>
            <person name="Daniels C.J."/>
            <person name="Dennis P.P."/>
            <person name="Omer A.D."/>
            <person name="Ebhardt H."/>
            <person name="Lowe T.M."/>
            <person name="Liang P."/>
            <person name="Riley M."/>
            <person name="Hood L."/>
            <person name="DasSarma S."/>
        </authorList>
    </citation>
    <scope>NUCLEOTIDE SEQUENCE [LARGE SCALE GENOMIC DNA]</scope>
    <source>
        <strain>ATCC 700922 / JCM 11081 / NRC-1</strain>
    </source>
</reference>
<keyword id="KW-0210">Decarboxylase</keyword>
<keyword id="KW-0456">Lyase</keyword>
<keyword id="KW-0665">Pyrimidine biosynthesis</keyword>
<keyword id="KW-1185">Reference proteome</keyword>